<protein>
    <recommendedName>
        <fullName evidence="1">Tryptophan synthase alpha chain</fullName>
        <ecNumber evidence="1">4.2.1.20</ecNumber>
    </recommendedName>
</protein>
<accession>Q31ZV3</accession>
<gene>
    <name evidence="1" type="primary">trpA</name>
    <name type="ordered locus">SBO_1806</name>
</gene>
<comment type="function">
    <text evidence="1">The alpha subunit is responsible for the aldol cleavage of indoleglycerol phosphate to indole and glyceraldehyde 3-phosphate.</text>
</comment>
<comment type="catalytic activity">
    <reaction evidence="1">
        <text>(1S,2R)-1-C-(indol-3-yl)glycerol 3-phosphate + L-serine = D-glyceraldehyde 3-phosphate + L-tryptophan + H2O</text>
        <dbReference type="Rhea" id="RHEA:10532"/>
        <dbReference type="ChEBI" id="CHEBI:15377"/>
        <dbReference type="ChEBI" id="CHEBI:33384"/>
        <dbReference type="ChEBI" id="CHEBI:57912"/>
        <dbReference type="ChEBI" id="CHEBI:58866"/>
        <dbReference type="ChEBI" id="CHEBI:59776"/>
        <dbReference type="EC" id="4.2.1.20"/>
    </reaction>
</comment>
<comment type="pathway">
    <text evidence="1">Amino-acid biosynthesis; L-tryptophan biosynthesis; L-tryptophan from chorismate: step 5/5.</text>
</comment>
<comment type="subunit">
    <text evidence="1">Tetramer of two alpha and two beta chains.</text>
</comment>
<comment type="similarity">
    <text evidence="1">Belongs to the TrpA family.</text>
</comment>
<proteinExistence type="inferred from homology"/>
<feature type="chain" id="PRO_1000018280" description="Tryptophan synthase alpha chain">
    <location>
        <begin position="1"/>
        <end position="268"/>
    </location>
</feature>
<feature type="active site" description="Proton acceptor" evidence="1">
    <location>
        <position position="49"/>
    </location>
</feature>
<feature type="active site" description="Proton acceptor" evidence="1">
    <location>
        <position position="60"/>
    </location>
</feature>
<reference key="1">
    <citation type="journal article" date="2005" name="Nucleic Acids Res.">
        <title>Genome dynamics and diversity of Shigella species, the etiologic agents of bacillary dysentery.</title>
        <authorList>
            <person name="Yang F."/>
            <person name="Yang J."/>
            <person name="Zhang X."/>
            <person name="Chen L."/>
            <person name="Jiang Y."/>
            <person name="Yan Y."/>
            <person name="Tang X."/>
            <person name="Wang J."/>
            <person name="Xiong Z."/>
            <person name="Dong J."/>
            <person name="Xue Y."/>
            <person name="Zhu Y."/>
            <person name="Xu X."/>
            <person name="Sun L."/>
            <person name="Chen S."/>
            <person name="Nie H."/>
            <person name="Peng J."/>
            <person name="Xu J."/>
            <person name="Wang Y."/>
            <person name="Yuan Z."/>
            <person name="Wen Y."/>
            <person name="Yao Z."/>
            <person name="Shen Y."/>
            <person name="Qiang B."/>
            <person name="Hou Y."/>
            <person name="Yu J."/>
            <person name="Jin Q."/>
        </authorList>
    </citation>
    <scope>NUCLEOTIDE SEQUENCE [LARGE SCALE GENOMIC DNA]</scope>
    <source>
        <strain>Sb227</strain>
    </source>
</reference>
<keyword id="KW-0028">Amino-acid biosynthesis</keyword>
<keyword id="KW-0057">Aromatic amino acid biosynthesis</keyword>
<keyword id="KW-0456">Lyase</keyword>
<keyword id="KW-0822">Tryptophan biosynthesis</keyword>
<organism>
    <name type="scientific">Shigella boydii serotype 4 (strain Sb227)</name>
    <dbReference type="NCBI Taxonomy" id="300268"/>
    <lineage>
        <taxon>Bacteria</taxon>
        <taxon>Pseudomonadati</taxon>
        <taxon>Pseudomonadota</taxon>
        <taxon>Gammaproteobacteria</taxon>
        <taxon>Enterobacterales</taxon>
        <taxon>Enterobacteriaceae</taxon>
        <taxon>Shigella</taxon>
    </lineage>
</organism>
<sequence length="268" mass="28823">MERYESLFAQLKERKEGAFVPFVTLRDPGIEQSLKIIDTLIEAGADALELGIPFSDPLADGPTIQNATLRAFAAGVTPAQCFEMLALIRQKHPTIPIGLLMYANLVFNKGIDEFYAQCEKVGVDSVLVADVPVEESAPFRQAALRHNVAPIFICPPNADDDLLRQIASYGRGYTYLLSRAGVTGAENRAALPLNHLVAKLKEYNAAPPLQGFGISAPDQVKAAIDAGAAGAISGSAIVKIIEQHINEPEKMLAALKVFVQPMKAATRS</sequence>
<name>TRPA_SHIBS</name>
<dbReference type="EC" id="4.2.1.20" evidence="1"/>
<dbReference type="EMBL" id="CP000036">
    <property type="protein sequence ID" value="ABB66405.1"/>
    <property type="molecule type" value="Genomic_DNA"/>
</dbReference>
<dbReference type="RefSeq" id="WP_000443093.1">
    <property type="nucleotide sequence ID" value="NC_007613.1"/>
</dbReference>
<dbReference type="SMR" id="Q31ZV3"/>
<dbReference type="KEGG" id="sbo:SBO_1806"/>
<dbReference type="HOGENOM" id="CLU_016734_0_4_6"/>
<dbReference type="UniPathway" id="UPA00035">
    <property type="reaction ID" value="UER00044"/>
</dbReference>
<dbReference type="Proteomes" id="UP000007067">
    <property type="component" value="Chromosome"/>
</dbReference>
<dbReference type="GO" id="GO:0005829">
    <property type="term" value="C:cytosol"/>
    <property type="evidence" value="ECO:0007669"/>
    <property type="project" value="TreeGrafter"/>
</dbReference>
<dbReference type="GO" id="GO:0004834">
    <property type="term" value="F:tryptophan synthase activity"/>
    <property type="evidence" value="ECO:0007669"/>
    <property type="project" value="UniProtKB-UniRule"/>
</dbReference>
<dbReference type="CDD" id="cd04724">
    <property type="entry name" value="Tryptophan_synthase_alpha"/>
    <property type="match status" value="1"/>
</dbReference>
<dbReference type="FunFam" id="3.20.20.70:FF:000037">
    <property type="entry name" value="Tryptophan synthase alpha chain"/>
    <property type="match status" value="1"/>
</dbReference>
<dbReference type="Gene3D" id="3.20.20.70">
    <property type="entry name" value="Aldolase class I"/>
    <property type="match status" value="1"/>
</dbReference>
<dbReference type="HAMAP" id="MF_00131">
    <property type="entry name" value="Trp_synth_alpha"/>
    <property type="match status" value="1"/>
</dbReference>
<dbReference type="InterPro" id="IPR013785">
    <property type="entry name" value="Aldolase_TIM"/>
</dbReference>
<dbReference type="InterPro" id="IPR011060">
    <property type="entry name" value="RibuloseP-bd_barrel"/>
</dbReference>
<dbReference type="InterPro" id="IPR018204">
    <property type="entry name" value="Trp_synthase_alpha_AS"/>
</dbReference>
<dbReference type="InterPro" id="IPR002028">
    <property type="entry name" value="Trp_synthase_suA"/>
</dbReference>
<dbReference type="NCBIfam" id="TIGR00262">
    <property type="entry name" value="trpA"/>
    <property type="match status" value="1"/>
</dbReference>
<dbReference type="PANTHER" id="PTHR43406:SF1">
    <property type="entry name" value="TRYPTOPHAN SYNTHASE ALPHA CHAIN, CHLOROPLASTIC"/>
    <property type="match status" value="1"/>
</dbReference>
<dbReference type="PANTHER" id="PTHR43406">
    <property type="entry name" value="TRYPTOPHAN SYNTHASE, ALPHA CHAIN"/>
    <property type="match status" value="1"/>
</dbReference>
<dbReference type="Pfam" id="PF00290">
    <property type="entry name" value="Trp_syntA"/>
    <property type="match status" value="1"/>
</dbReference>
<dbReference type="SUPFAM" id="SSF51366">
    <property type="entry name" value="Ribulose-phoshate binding barrel"/>
    <property type="match status" value="1"/>
</dbReference>
<dbReference type="PROSITE" id="PS00167">
    <property type="entry name" value="TRP_SYNTHASE_ALPHA"/>
    <property type="match status" value="1"/>
</dbReference>
<evidence type="ECO:0000255" key="1">
    <source>
        <dbReference type="HAMAP-Rule" id="MF_00131"/>
    </source>
</evidence>